<accession>P0C507</accession>
<accession>P12093</accession>
<accession>Q6QY81</accession>
<feature type="chain" id="PRO_0000067937" description="DNA-directed RNA polymerase subunit beta''">
    <location>
        <begin position="1"/>
        <end position="1513"/>
    </location>
</feature>
<feature type="region of interest" description="Disordered" evidence="2">
    <location>
        <begin position="644"/>
        <end position="769"/>
    </location>
</feature>
<feature type="compositionally biased region" description="Basic and acidic residues" evidence="2">
    <location>
        <begin position="659"/>
        <end position="679"/>
    </location>
</feature>
<feature type="compositionally biased region" description="Acidic residues" evidence="2">
    <location>
        <begin position="680"/>
        <end position="707"/>
    </location>
</feature>
<feature type="compositionally biased region" description="Basic and acidic residues" evidence="2">
    <location>
        <begin position="726"/>
        <end position="737"/>
    </location>
</feature>
<feature type="compositionally biased region" description="Acidic residues" evidence="2">
    <location>
        <begin position="738"/>
        <end position="767"/>
    </location>
</feature>
<feature type="binding site" evidence="1">
    <location>
        <position position="220"/>
    </location>
    <ligand>
        <name>Zn(2+)</name>
        <dbReference type="ChEBI" id="CHEBI:29105"/>
    </ligand>
</feature>
<feature type="binding site" evidence="1">
    <location>
        <position position="296"/>
    </location>
    <ligand>
        <name>Zn(2+)</name>
        <dbReference type="ChEBI" id="CHEBI:29105"/>
    </ligand>
</feature>
<feature type="binding site" evidence="1">
    <location>
        <position position="303"/>
    </location>
    <ligand>
        <name>Zn(2+)</name>
        <dbReference type="ChEBI" id="CHEBI:29105"/>
    </ligand>
</feature>
<feature type="binding site" evidence="1">
    <location>
        <position position="306"/>
    </location>
    <ligand>
        <name>Zn(2+)</name>
        <dbReference type="ChEBI" id="CHEBI:29105"/>
    </ligand>
</feature>
<reference key="1">
    <citation type="journal article" date="2004" name="Plant Physiol.">
        <title>A comparison of rice chloroplast genomes.</title>
        <authorList>
            <person name="Tang J."/>
            <person name="Xia H."/>
            <person name="Cao M."/>
            <person name="Zhang X."/>
            <person name="Zeng W."/>
            <person name="Hu S."/>
            <person name="Tong W."/>
            <person name="Wang J."/>
            <person name="Wang J."/>
            <person name="Yu J."/>
            <person name="Yang H."/>
            <person name="Zhu L."/>
        </authorList>
    </citation>
    <scope>NUCLEOTIDE SEQUENCE [LARGE SCALE GENOMIC DNA]</scope>
    <source>
        <strain>cv. PA64s</strain>
    </source>
</reference>
<keyword id="KW-0150">Chloroplast</keyword>
<keyword id="KW-0240">DNA-directed RNA polymerase</keyword>
<keyword id="KW-0479">Metal-binding</keyword>
<keyword id="KW-0548">Nucleotidyltransferase</keyword>
<keyword id="KW-0934">Plastid</keyword>
<keyword id="KW-0804">Transcription</keyword>
<keyword id="KW-0808">Transferase</keyword>
<keyword id="KW-0862">Zinc</keyword>
<evidence type="ECO:0000255" key="1">
    <source>
        <dbReference type="HAMAP-Rule" id="MF_01324"/>
    </source>
</evidence>
<evidence type="ECO:0000256" key="2">
    <source>
        <dbReference type="SAM" id="MobiDB-lite"/>
    </source>
</evidence>
<protein>
    <recommendedName>
        <fullName evidence="1">DNA-directed RNA polymerase subunit beta''</fullName>
        <ecNumber evidence="1">2.7.7.6</ecNumber>
    </recommendedName>
    <alternativeName>
        <fullName evidence="1">PEP</fullName>
    </alternativeName>
    <alternativeName>
        <fullName evidence="1">Plastid-encoded RNA polymerase subunit beta''</fullName>
        <shortName evidence="1">RNA polymerase subunit beta''</shortName>
    </alternativeName>
</protein>
<proteinExistence type="inferred from homology"/>
<name>RPOC2_ORYSA</name>
<sequence>MAERANLVFQNKEIDGTAMKRLISRLIDHFGMGYTSHILDQIKTLGFHQATTTSISLGIEDLLTIPSKGWLVQDAEQQSFLLEKHYYYGAVHAVEKLRQSVEIWYATSEYLKHEMNSNFRITDPSNPVYLMSFSGARGNASQVHQLVGMRGLMADPQGQMIDLPIQSNLREGLSLTEYIISCYGARKGVVDTAVRTADAGYLTRRLVEVVQHIIVRRRDCGTIQAISVSPQNGMTEKLFVQTLIGRVLANDIYIGSRCIATRNQDIGIGLVNRFITTFRAQPFRAQPIYIRTPFTCRSTSWICQLCYGRSSTHGDLVELGEAVGVIAGQSIGEPGTQLTLRTFHTGGVFTGGTADLVRSPSNGKIQFNGDLVHPTRTRHGQPAFLCYIDLHITIQSQDILHSVTIPSKSLILVQNDQYVESEQVIAEIRAGTSALHFKEKVQKHIYSESDGEMHWSTDVYHAPEYQYGNLRRLPKTSHLWILSVSMCRSSIASFSLHKDQDQMNTYSFSVDGRYIFGLSMADDEVRHRLLDTFGKKDREILDYSTPDRIMSNGHWNFVYPSILQNNFDLLAKKRRNRFAIPLQYHQEQEKEPISCFGISIEIPFMGVLRRNTIVAYFDDPRYKKDKKGSGIVKFRYRTLEDEYRTREKDSENEYGSPENEYRTREEECKTLEDEYRTREEEYETLEDEYGIPENEYETLEDEYGILEDEYRTREEESEDEYGSPENKYRPREDKYGTLEEDSEDEHGTLEEDSEEDSEDEYGNPEEDSVLKKGVLIEHRGTKEFSLKYQKEVDRFFFILQELHILPRSSSLKVLDNSIIGVDTQLTKNTRSRLGGLVRVKRKKSHTELKIFSGDIHFPEEADKILGGSLIPLEREKKDSKESKKRENWVYVQWKKILKSKEKYFVLVRPAVAYEMNEGRNLATLFPQDLLQEEGNLQLRLVNFISHENSKLTQRIYHTNSQFVRTCLVLNWEQEEKEEARASLVEIRANGLIRDFLRIGLIKSTISYTRKRYDSRSAGLILHNRLDRTNTNSFYSKAKIQSLSQHQEAIGTLLNRNKEYQSLMVLSASNCSRIGFFKNSKNPNGVKESNPRIPIPKFWGLFRNFSGLLGTIAPSISNFSSSYYLLTYNQILLKKHLLLDNLKQNFKVLQGLKHSLINENQRTSNFDSNIMLDPFQLNWHFLPHDSWEETSAKIHLGQFICENVCLFKSHIKKSGQIFIVNIDSFVIRAAKPYLATTGATVHGHYGEILYKGDRLVTFIYEKARSSDITQGLPKVEQIFEARSIDSLSPNLERRIEDWNERIPRILGGPWGFLIGAELTIAQSRISLVNKIQKVYRSQGVQIHNRHIEIIIRQVTSKVRVSEDGMSNVFSPGELIGLLRAERAGRALDESIYYRAILLGITRVSLNTQSFISEASFQETARVLAKAALRGRIDWLKGLKENVVLGGIIPVGTGFQKFVHRYPQNKNLYFEIQKKKLFASEMRDILFLHTELVSSDSDVTNNFYETSESPFTPFI</sequence>
<dbReference type="EC" id="2.7.7.6" evidence="1"/>
<dbReference type="EMBL" id="AY522331">
    <property type="status" value="NOT_ANNOTATED_CDS"/>
    <property type="molecule type" value="Genomic_DNA"/>
</dbReference>
<dbReference type="SMR" id="P0C507"/>
<dbReference type="GO" id="GO:0009507">
    <property type="term" value="C:chloroplast"/>
    <property type="evidence" value="ECO:0007669"/>
    <property type="project" value="UniProtKB-SubCell"/>
</dbReference>
<dbReference type="GO" id="GO:0000428">
    <property type="term" value="C:DNA-directed RNA polymerase complex"/>
    <property type="evidence" value="ECO:0007669"/>
    <property type="project" value="UniProtKB-KW"/>
</dbReference>
<dbReference type="GO" id="GO:0005739">
    <property type="term" value="C:mitochondrion"/>
    <property type="evidence" value="ECO:0007669"/>
    <property type="project" value="GOC"/>
</dbReference>
<dbReference type="GO" id="GO:0009536">
    <property type="term" value="C:plastid"/>
    <property type="evidence" value="ECO:0000305"/>
    <property type="project" value="Gramene"/>
</dbReference>
<dbReference type="GO" id="GO:0003677">
    <property type="term" value="F:DNA binding"/>
    <property type="evidence" value="ECO:0007669"/>
    <property type="project" value="UniProtKB-UniRule"/>
</dbReference>
<dbReference type="GO" id="GO:0003899">
    <property type="term" value="F:DNA-directed RNA polymerase activity"/>
    <property type="evidence" value="ECO:0007669"/>
    <property type="project" value="UniProtKB-UniRule"/>
</dbReference>
<dbReference type="GO" id="GO:0008270">
    <property type="term" value="F:zinc ion binding"/>
    <property type="evidence" value="ECO:0007669"/>
    <property type="project" value="UniProtKB-UniRule"/>
</dbReference>
<dbReference type="GO" id="GO:0006351">
    <property type="term" value="P:DNA-templated transcription"/>
    <property type="evidence" value="ECO:0007669"/>
    <property type="project" value="UniProtKB-UniRule"/>
</dbReference>
<dbReference type="CDD" id="cd02655">
    <property type="entry name" value="RNAP_beta'_C"/>
    <property type="match status" value="1"/>
</dbReference>
<dbReference type="Gene3D" id="1.10.132.30">
    <property type="match status" value="1"/>
</dbReference>
<dbReference type="Gene3D" id="1.10.150.390">
    <property type="match status" value="1"/>
</dbReference>
<dbReference type="Gene3D" id="1.10.1790.20">
    <property type="match status" value="1"/>
</dbReference>
<dbReference type="Gene3D" id="1.10.274.100">
    <property type="entry name" value="RNA polymerase Rpb1, domain 3"/>
    <property type="match status" value="1"/>
</dbReference>
<dbReference type="HAMAP" id="MF_01324">
    <property type="entry name" value="RNApol_bact_RpoC2"/>
    <property type="match status" value="1"/>
</dbReference>
<dbReference type="InterPro" id="IPR012756">
    <property type="entry name" value="DNA-dir_RpoC2_beta_pp"/>
</dbReference>
<dbReference type="InterPro" id="IPR050254">
    <property type="entry name" value="RNA_pol_beta''_euk"/>
</dbReference>
<dbReference type="InterPro" id="IPR042102">
    <property type="entry name" value="RNA_pol_Rpb1_3_sf"/>
</dbReference>
<dbReference type="InterPro" id="IPR007083">
    <property type="entry name" value="RNA_pol_Rpb1_4"/>
</dbReference>
<dbReference type="InterPro" id="IPR007081">
    <property type="entry name" value="RNA_pol_Rpb1_5"/>
</dbReference>
<dbReference type="InterPro" id="IPR038120">
    <property type="entry name" value="Rpb1_funnel_sf"/>
</dbReference>
<dbReference type="NCBIfam" id="TIGR02388">
    <property type="entry name" value="rpoC2_cyan"/>
    <property type="match status" value="1"/>
</dbReference>
<dbReference type="PANTHER" id="PTHR34995">
    <property type="entry name" value="DNA-DIRECTED RNA POLYMERASE SUBUNIT BETA"/>
    <property type="match status" value="1"/>
</dbReference>
<dbReference type="PANTHER" id="PTHR34995:SF1">
    <property type="entry name" value="DNA-DIRECTED RNA POLYMERASE SUBUNIT BETA"/>
    <property type="match status" value="1"/>
</dbReference>
<dbReference type="Pfam" id="PF05000">
    <property type="entry name" value="RNA_pol_Rpb1_4"/>
    <property type="match status" value="1"/>
</dbReference>
<dbReference type="Pfam" id="PF04998">
    <property type="entry name" value="RNA_pol_Rpb1_5"/>
    <property type="match status" value="2"/>
</dbReference>
<dbReference type="SUPFAM" id="SSF64484">
    <property type="entry name" value="beta and beta-prime subunits of DNA dependent RNA-polymerase"/>
    <property type="match status" value="1"/>
</dbReference>
<geneLocation type="chloroplast"/>
<comment type="function">
    <text evidence="1">DNA-dependent RNA polymerase catalyzes the transcription of DNA into RNA using the four ribonucleoside triphosphates as substrates.</text>
</comment>
<comment type="catalytic activity">
    <reaction evidence="1">
        <text>RNA(n) + a ribonucleoside 5'-triphosphate = RNA(n+1) + diphosphate</text>
        <dbReference type="Rhea" id="RHEA:21248"/>
        <dbReference type="Rhea" id="RHEA-COMP:14527"/>
        <dbReference type="Rhea" id="RHEA-COMP:17342"/>
        <dbReference type="ChEBI" id="CHEBI:33019"/>
        <dbReference type="ChEBI" id="CHEBI:61557"/>
        <dbReference type="ChEBI" id="CHEBI:140395"/>
        <dbReference type="EC" id="2.7.7.6"/>
    </reaction>
</comment>
<comment type="cofactor">
    <cofactor evidence="1">
        <name>Zn(2+)</name>
        <dbReference type="ChEBI" id="CHEBI:29105"/>
    </cofactor>
    <text evidence="1">Binds 1 Zn(2+) ion per subunit.</text>
</comment>
<comment type="subunit">
    <text evidence="1">In plastids the minimal PEP RNA polymerase catalytic core is composed of four subunits: alpha, beta, beta', and beta''. When a (nuclear-encoded) sigma factor is associated with the core the holoenzyme is formed, which can initiate transcription.</text>
</comment>
<comment type="subcellular location">
    <subcellularLocation>
        <location evidence="1">Plastid</location>
        <location evidence="1">Chloroplast</location>
    </subcellularLocation>
</comment>
<comment type="similarity">
    <text evidence="1">Belongs to the RNA polymerase beta' chain family. RpoC2 subfamily.</text>
</comment>
<gene>
    <name evidence="1" type="primary">rpoC2</name>
</gene>
<organism>
    <name type="scientific">Oryza sativa</name>
    <name type="common">Rice</name>
    <dbReference type="NCBI Taxonomy" id="4530"/>
    <lineage>
        <taxon>Eukaryota</taxon>
        <taxon>Viridiplantae</taxon>
        <taxon>Streptophyta</taxon>
        <taxon>Embryophyta</taxon>
        <taxon>Tracheophyta</taxon>
        <taxon>Spermatophyta</taxon>
        <taxon>Magnoliopsida</taxon>
        <taxon>Liliopsida</taxon>
        <taxon>Poales</taxon>
        <taxon>Poaceae</taxon>
        <taxon>BOP clade</taxon>
        <taxon>Oryzoideae</taxon>
        <taxon>Oryzeae</taxon>
        <taxon>Oryzinae</taxon>
        <taxon>Oryza</taxon>
    </lineage>
</organism>